<dbReference type="GO" id="GO:0005576">
    <property type="term" value="C:extracellular region"/>
    <property type="evidence" value="ECO:0007005"/>
    <property type="project" value="UniProtKB"/>
</dbReference>
<dbReference type="GO" id="GO:0007218">
    <property type="term" value="P:neuropeptide signaling pathway"/>
    <property type="evidence" value="ECO:0007669"/>
    <property type="project" value="UniProtKB-KW"/>
</dbReference>
<proteinExistence type="evidence at protein level"/>
<accession>P86580</accession>
<sequence>APSMGFMGMR</sequence>
<comment type="subcellular location">
    <subcellularLocation>
        <location evidence="1 3">Secreted</location>
    </subcellularLocation>
</comment>
<comment type="tissue specificity">
    <text evidence="1">Expressed in the antennal lobe (at protein level).</text>
</comment>
<reference evidence="3" key="1">
    <citation type="journal article" date="2009" name="Peptides">
        <title>Neuropeptides in Heteroptera: identification of allatotropin-related peptide and tachykinin-related peptides using MALDI-TOF mass spectrometry.</title>
        <authorList>
            <person name="Neupert S."/>
            <person name="Russell W.K."/>
            <person name="Russell D.H."/>
            <person name="Lopez J.D. Jr."/>
            <person name="Predel R."/>
            <person name="Nachman R.J."/>
        </authorList>
    </citation>
    <scope>PROTEIN SEQUENCE</scope>
    <scope>SUBCELLULAR LOCATION</scope>
    <scope>TISSUE SPECIFICITY</scope>
    <scope>AMIDATION AT ARG-10</scope>
    <source>
        <tissue evidence="1">Antennal lobe</tissue>
    </source>
</reference>
<keyword id="KW-0027">Amidation</keyword>
<keyword id="KW-0903">Direct protein sequencing</keyword>
<keyword id="KW-0527">Neuropeptide</keyword>
<keyword id="KW-0964">Secreted</keyword>
<name>TRP6_NEZVI</name>
<organism>
    <name type="scientific">Nezara viridula</name>
    <name type="common">Southern green stink bug</name>
    <name type="synonym">Cimex viridulus</name>
    <dbReference type="NCBI Taxonomy" id="85310"/>
    <lineage>
        <taxon>Eukaryota</taxon>
        <taxon>Metazoa</taxon>
        <taxon>Ecdysozoa</taxon>
        <taxon>Arthropoda</taxon>
        <taxon>Hexapoda</taxon>
        <taxon>Insecta</taxon>
        <taxon>Pterygota</taxon>
        <taxon>Neoptera</taxon>
        <taxon>Paraneoptera</taxon>
        <taxon>Hemiptera</taxon>
        <taxon>Heteroptera</taxon>
        <taxon>Panheteroptera</taxon>
        <taxon>Pentatomomorpha</taxon>
        <taxon>Pentatomoidea</taxon>
        <taxon>Pentatomidae</taxon>
        <taxon>Pentatominae</taxon>
        <taxon>Nezara</taxon>
    </lineage>
</organism>
<feature type="peptide" id="PRO_0000395649" description="Tachykinin-related peptide 6" evidence="1">
    <location>
        <begin position="1"/>
        <end position="10"/>
    </location>
</feature>
<feature type="modified residue" description="Arginine amide" evidence="1">
    <location>
        <position position="10"/>
    </location>
</feature>
<protein>
    <recommendedName>
        <fullName evidence="2">Tachykinin-related peptide 6</fullName>
        <shortName evidence="2">TKRP-6</shortName>
    </recommendedName>
</protein>
<evidence type="ECO:0000269" key="1">
    <source>
    </source>
</evidence>
<evidence type="ECO:0000303" key="2">
    <source>
    </source>
</evidence>
<evidence type="ECO:0000305" key="3"/>